<feature type="initiator methionine" description="Removed" evidence="2">
    <location>
        <position position="1"/>
    </location>
</feature>
<feature type="chain" id="PRO_0000247439" description="Ubiquitin-conjugating enzyme E2 variant 2">
    <location>
        <begin position="2"/>
        <end position="145"/>
    </location>
</feature>
<feature type="domain" description="UBC core" evidence="3">
    <location>
        <begin position="10"/>
        <end position="145"/>
    </location>
</feature>
<feature type="modified residue" description="N-acetylalanine" evidence="2">
    <location>
        <position position="2"/>
    </location>
</feature>
<keyword id="KW-0007">Acetylation</keyword>
<keyword id="KW-1185">Reference proteome</keyword>
<keyword id="KW-0833">Ubl conjugation pathway</keyword>
<reference key="1">
    <citation type="submission" date="2005-08" db="EMBL/GenBank/DDBJ databases">
        <authorList>
            <consortium name="NIH - Mammalian Gene Collection (MGC) project"/>
        </authorList>
    </citation>
    <scope>NUCLEOTIDE SEQUENCE [LARGE SCALE MRNA]</scope>
    <source>
        <strain>Hereford</strain>
        <tissue>Thymus</tissue>
    </source>
</reference>
<comment type="function">
    <text evidence="1">Has no ubiquitin ligase activity on its own. The UBE2V2/UBE2N heterodimer catalyzes the synthesis of non-canonical poly-ubiquitin chains that are linked through 'Lys-63'. This type of poly-ubiquitination does not lead to protein degradation by the proteasome. Mediates transcriptional activation of target genes. Plays a role in the control of progress through the cell cycle and differentiation. Plays a role in the error-free DNA repair pathway and contributes to the survival of cells after DNA damage (By similarity).</text>
</comment>
<comment type="subunit">
    <text evidence="1">Heterodimer with UBE2N. Binds CHFR (By similarity).</text>
</comment>
<comment type="similarity">
    <text evidence="3">Belongs to the ubiquitin-conjugating enzyme family.</text>
</comment>
<proteinExistence type="evidence at transcript level"/>
<dbReference type="EMBL" id="BC103159">
    <property type="protein sequence ID" value="AAI03160.1"/>
    <property type="molecule type" value="mRNA"/>
</dbReference>
<dbReference type="RefSeq" id="NP_001029214.1">
    <property type="nucleotide sequence ID" value="NM_001034042.2"/>
</dbReference>
<dbReference type="SMR" id="Q3SZ43"/>
<dbReference type="FunCoup" id="Q3SZ43">
    <property type="interactions" value="4189"/>
</dbReference>
<dbReference type="STRING" id="9913.ENSBTAP00000071254"/>
<dbReference type="PaxDb" id="9913-ENSBTAP00000031532"/>
<dbReference type="PeptideAtlas" id="Q3SZ43"/>
<dbReference type="GeneID" id="286803"/>
<dbReference type="KEGG" id="bta:286803"/>
<dbReference type="CTD" id="7336"/>
<dbReference type="eggNOG" id="KOG0896">
    <property type="taxonomic scope" value="Eukaryota"/>
</dbReference>
<dbReference type="HOGENOM" id="CLU_063065_3_0_1"/>
<dbReference type="InParanoid" id="Q3SZ43"/>
<dbReference type="OrthoDB" id="6508832at2759"/>
<dbReference type="TreeFam" id="TF316971"/>
<dbReference type="Proteomes" id="UP000009136">
    <property type="component" value="Unplaced"/>
</dbReference>
<dbReference type="GO" id="GO:0005634">
    <property type="term" value="C:nucleus"/>
    <property type="evidence" value="ECO:0000318"/>
    <property type="project" value="GO_Central"/>
</dbReference>
<dbReference type="GO" id="GO:0031371">
    <property type="term" value="C:ubiquitin conjugating enzyme complex"/>
    <property type="evidence" value="ECO:0000318"/>
    <property type="project" value="GO_Central"/>
</dbReference>
<dbReference type="GO" id="GO:0006301">
    <property type="term" value="P:postreplication repair"/>
    <property type="evidence" value="ECO:0000318"/>
    <property type="project" value="GO_Central"/>
</dbReference>
<dbReference type="GO" id="GO:0070534">
    <property type="term" value="P:protein K63-linked ubiquitination"/>
    <property type="evidence" value="ECO:0000318"/>
    <property type="project" value="GO_Central"/>
</dbReference>
<dbReference type="CDD" id="cd23807">
    <property type="entry name" value="UEV_UBE2V"/>
    <property type="match status" value="1"/>
</dbReference>
<dbReference type="FunFam" id="3.10.110.10:FF:000012">
    <property type="entry name" value="Ubiquitin-conjugating enzyme E2 variant 2"/>
    <property type="match status" value="1"/>
</dbReference>
<dbReference type="Gene3D" id="3.10.110.10">
    <property type="entry name" value="Ubiquitin Conjugating Enzyme"/>
    <property type="match status" value="1"/>
</dbReference>
<dbReference type="InterPro" id="IPR000608">
    <property type="entry name" value="UBQ-conjugat_E2_core"/>
</dbReference>
<dbReference type="InterPro" id="IPR016135">
    <property type="entry name" value="UBQ-conjugating_enzyme/RWD"/>
</dbReference>
<dbReference type="PANTHER" id="PTHR24068">
    <property type="entry name" value="UBIQUITIN-CONJUGATING ENZYME E2"/>
    <property type="match status" value="1"/>
</dbReference>
<dbReference type="Pfam" id="PF00179">
    <property type="entry name" value="UQ_con"/>
    <property type="match status" value="1"/>
</dbReference>
<dbReference type="SMART" id="SM00212">
    <property type="entry name" value="UBCc"/>
    <property type="match status" value="1"/>
</dbReference>
<dbReference type="SUPFAM" id="SSF54495">
    <property type="entry name" value="UBC-like"/>
    <property type="match status" value="1"/>
</dbReference>
<dbReference type="PROSITE" id="PS50127">
    <property type="entry name" value="UBC_2"/>
    <property type="match status" value="1"/>
</dbReference>
<organism>
    <name type="scientific">Bos taurus</name>
    <name type="common">Bovine</name>
    <dbReference type="NCBI Taxonomy" id="9913"/>
    <lineage>
        <taxon>Eukaryota</taxon>
        <taxon>Metazoa</taxon>
        <taxon>Chordata</taxon>
        <taxon>Craniata</taxon>
        <taxon>Vertebrata</taxon>
        <taxon>Euteleostomi</taxon>
        <taxon>Mammalia</taxon>
        <taxon>Eutheria</taxon>
        <taxon>Laurasiatheria</taxon>
        <taxon>Artiodactyla</taxon>
        <taxon>Ruminantia</taxon>
        <taxon>Pecora</taxon>
        <taxon>Bovidae</taxon>
        <taxon>Bovinae</taxon>
        <taxon>Bos</taxon>
    </lineage>
</organism>
<sequence length="145" mass="16363">MAVSTGVKVPRNFRLLEELEEGQKGVGDGTVSWGLEDDEDMTLTRWTGMIIGPPRTNYENRIYSLKVECGPKYPEAPPSVRFVTKINMNGINNSSGMVDARSIPVLAKWQNSYSIKVVLQELRRLMMSKENMKLPQPPEGQTYNN</sequence>
<gene>
    <name type="primary">UBE2V2</name>
    <name type="synonym">UEV2</name>
</gene>
<evidence type="ECO:0000250" key="1"/>
<evidence type="ECO:0000250" key="2">
    <source>
        <dbReference type="UniProtKB" id="Q15819"/>
    </source>
</evidence>
<evidence type="ECO:0000255" key="3">
    <source>
        <dbReference type="PROSITE-ProRule" id="PRU00388"/>
    </source>
</evidence>
<accession>Q3SZ43</accession>
<name>UB2V2_BOVIN</name>
<protein>
    <recommendedName>
        <fullName>Ubiquitin-conjugating enzyme E2 variant 2</fullName>
    </recommendedName>
</protein>